<protein>
    <recommendedName>
        <fullName evidence="9">Leghemoglobin alpha</fullName>
        <shortName evidence="9">Leghemoglobin A</shortName>
        <shortName evidence="8">PvLba</shortName>
    </recommendedName>
</protein>
<accession>P02234</accession>
<accession>Q03972</accession>
<dbReference type="EMBL" id="K03152">
    <property type="protein sequence ID" value="AAA33767.1"/>
    <property type="molecule type" value="Genomic_DNA"/>
</dbReference>
<dbReference type="EMBL" id="CM002294">
    <property type="protein sequence ID" value="ESW16259.1"/>
    <property type="molecule type" value="Genomic_DNA"/>
</dbReference>
<dbReference type="EMBL" id="CM002294">
    <property type="protein sequence ID" value="ESW16267.1"/>
    <property type="molecule type" value="Genomic_DNA"/>
</dbReference>
<dbReference type="EMBL" id="CM002294">
    <property type="protein sequence ID" value="ESW16268.1"/>
    <property type="molecule type" value="Genomic_DNA"/>
</dbReference>
<dbReference type="PIR" id="A02556">
    <property type="entry name" value="GPFBA"/>
</dbReference>
<dbReference type="RefSeq" id="XP_007144265.1">
    <property type="nucleotide sequence ID" value="XM_007144203.1"/>
</dbReference>
<dbReference type="RefSeq" id="XP_007144273.1">
    <property type="nucleotide sequence ID" value="XM_007144211.1"/>
</dbReference>
<dbReference type="RefSeq" id="XP_007144274.1">
    <property type="nucleotide sequence ID" value="XM_007144212.1"/>
</dbReference>
<dbReference type="SMR" id="P02234"/>
<dbReference type="ProMEX" id="P02234"/>
<dbReference type="EnsemblPlants" id="ESW16259">
    <property type="protein sequence ID" value="ESW16259"/>
    <property type="gene ID" value="PHAVU_007G141900g"/>
</dbReference>
<dbReference type="EnsemblPlants" id="ESW16267">
    <property type="protein sequence ID" value="ESW16267"/>
    <property type="gene ID" value="PHAVU_007G142500g"/>
</dbReference>
<dbReference type="EnsemblPlants" id="ESW16268">
    <property type="protein sequence ID" value="ESW16268"/>
    <property type="gene ID" value="PHAVU_007G142600g"/>
</dbReference>
<dbReference type="Gramene" id="ESW16259">
    <property type="protein sequence ID" value="ESW16259"/>
    <property type="gene ID" value="PHAVU_007G141900g"/>
</dbReference>
<dbReference type="Gramene" id="ESW16267">
    <property type="protein sequence ID" value="ESW16267"/>
    <property type="gene ID" value="PHAVU_007G142500g"/>
</dbReference>
<dbReference type="Gramene" id="ESW16268">
    <property type="protein sequence ID" value="ESW16268"/>
    <property type="gene ID" value="PHAVU_007G142600g"/>
</dbReference>
<dbReference type="OrthoDB" id="2012505at2759"/>
<dbReference type="Proteomes" id="UP000000226">
    <property type="component" value="Chromosome 7"/>
</dbReference>
<dbReference type="GO" id="GO:0005829">
    <property type="term" value="C:cytosol"/>
    <property type="evidence" value="ECO:0007669"/>
    <property type="project" value="UniProtKB-SubCell"/>
</dbReference>
<dbReference type="GO" id="GO:0005634">
    <property type="term" value="C:nucleus"/>
    <property type="evidence" value="ECO:0007669"/>
    <property type="project" value="UniProtKB-SubCell"/>
</dbReference>
<dbReference type="GO" id="GO:0020037">
    <property type="term" value="F:heme binding"/>
    <property type="evidence" value="ECO:0007669"/>
    <property type="project" value="InterPro"/>
</dbReference>
<dbReference type="GO" id="GO:0046872">
    <property type="term" value="F:metal ion binding"/>
    <property type="evidence" value="ECO:0007669"/>
    <property type="project" value="UniProtKB-KW"/>
</dbReference>
<dbReference type="GO" id="GO:0019825">
    <property type="term" value="F:oxygen binding"/>
    <property type="evidence" value="ECO:0007669"/>
    <property type="project" value="InterPro"/>
</dbReference>
<dbReference type="GO" id="GO:0005344">
    <property type="term" value="F:oxygen carrier activity"/>
    <property type="evidence" value="ECO:0007669"/>
    <property type="project" value="UniProtKB-KW"/>
</dbReference>
<dbReference type="GO" id="GO:0009877">
    <property type="term" value="P:nodulation"/>
    <property type="evidence" value="ECO:0007669"/>
    <property type="project" value="UniProtKB-KW"/>
</dbReference>
<dbReference type="Gene3D" id="1.10.490.10">
    <property type="entry name" value="Globins"/>
    <property type="match status" value="1"/>
</dbReference>
<dbReference type="InterPro" id="IPR000971">
    <property type="entry name" value="Globin"/>
</dbReference>
<dbReference type="InterPro" id="IPR009050">
    <property type="entry name" value="Globin-like_sf"/>
</dbReference>
<dbReference type="InterPro" id="IPR012292">
    <property type="entry name" value="Globin/Proto"/>
</dbReference>
<dbReference type="InterPro" id="IPR001032">
    <property type="entry name" value="Leghaemoglobin-like"/>
</dbReference>
<dbReference type="InterPro" id="IPR019824">
    <property type="entry name" value="Leghaemoglobin_Fe_BS"/>
</dbReference>
<dbReference type="PANTHER" id="PTHR22924">
    <property type="entry name" value="LEGHEMOGLOBIN-RELATED"/>
    <property type="match status" value="1"/>
</dbReference>
<dbReference type="PANTHER" id="PTHR22924:SF92">
    <property type="entry name" value="NON-SYMBIOTIC HEMOGLOBIN 2"/>
    <property type="match status" value="1"/>
</dbReference>
<dbReference type="Pfam" id="PF00042">
    <property type="entry name" value="Globin"/>
    <property type="match status" value="1"/>
</dbReference>
<dbReference type="PRINTS" id="PR00188">
    <property type="entry name" value="PLANTGLOBIN"/>
</dbReference>
<dbReference type="SUPFAM" id="SSF46458">
    <property type="entry name" value="Globin-like"/>
    <property type="match status" value="1"/>
</dbReference>
<dbReference type="PROSITE" id="PS01033">
    <property type="entry name" value="GLOBIN"/>
    <property type="match status" value="1"/>
</dbReference>
<dbReference type="PROSITE" id="PS00208">
    <property type="entry name" value="PLANT_GLOBIN"/>
    <property type="match status" value="1"/>
</dbReference>
<proteinExistence type="evidence at protein level"/>
<name>LGBA_PHAVU</name>
<evidence type="ECO:0000250" key="1">
    <source>
        <dbReference type="UniProtKB" id="P02237"/>
    </source>
</evidence>
<evidence type="ECO:0000250" key="2">
    <source>
        <dbReference type="UniProtKB" id="P02240"/>
    </source>
</evidence>
<evidence type="ECO:0000250" key="3">
    <source>
        <dbReference type="UniProtKB" id="Q3C1F7"/>
    </source>
</evidence>
<evidence type="ECO:0000250" key="4">
    <source>
        <dbReference type="UniProtKB" id="Q43296"/>
    </source>
</evidence>
<evidence type="ECO:0000255" key="5">
    <source>
        <dbReference type="PROSITE-ProRule" id="PRU00238"/>
    </source>
</evidence>
<evidence type="ECO:0000269" key="6">
    <source>
    </source>
</evidence>
<evidence type="ECO:0000269" key="7">
    <source>
    </source>
</evidence>
<evidence type="ECO:0000303" key="8">
    <source>
    </source>
</evidence>
<evidence type="ECO:0000303" key="9">
    <source>
    </source>
</evidence>
<evidence type="ECO:0000305" key="10"/>
<evidence type="ECO:0000312" key="11">
    <source>
        <dbReference type="EMBL" id="ESW16259.1"/>
    </source>
</evidence>
<evidence type="ECO:0000312" key="12">
    <source>
        <dbReference type="EMBL" id="ESW16267.1"/>
    </source>
</evidence>
<evidence type="ECO:0000312" key="13">
    <source>
        <dbReference type="EMBL" id="ESW16268.1"/>
    </source>
</evidence>
<reference key="1">
    <citation type="journal article" date="1975" name="Eur. J. Biochem.">
        <title>The amino-acid sequence of leghemoglobin component A from Phaseolus vulgaris (kidney bean).</title>
        <authorList>
            <person name="Lehtovaara P."/>
            <person name="Ellfolk N."/>
        </authorList>
    </citation>
    <scope>PROTEIN SEQUENCE OF 2-146</scope>
    <scope>TISSUE SPECIFICITY</scope>
    <source>
        <strain>cv. Kaiser Wilhelm</strain>
        <tissue>Root nodule</tissue>
    </source>
</reference>
<reference key="2">
    <citation type="journal article" date="1984" name="EMBO J.">
        <title>Structure and chromosomal arrangement of leghemoglobin genes in kidney bean suggest divergence in soybean leghemoglobin gene loci following tetraploidization.</title>
        <authorList>
            <person name="Lee J.S."/>
            <person name="Verma D.P."/>
        </authorList>
    </citation>
    <scope>NUCLEOTIDE SEQUENCE [GENOMIC DNA]</scope>
</reference>
<reference key="3">
    <citation type="journal article" date="2014" name="Nat. Genet.">
        <title>A reference genome for common bean and genome-wide analysis of dual domestications.</title>
        <authorList>
            <person name="Schmutz J."/>
            <person name="McClean P.E."/>
            <person name="Mamidi S."/>
            <person name="Wu G.A."/>
            <person name="Cannon S.B."/>
            <person name="Grimwood J."/>
            <person name="Jenkins J."/>
            <person name="Shu S."/>
            <person name="Song Q."/>
            <person name="Chavarro C."/>
            <person name="Torres-Torres M."/>
            <person name="Geffroy V."/>
            <person name="Moghaddam S.M."/>
            <person name="Gao D."/>
            <person name="Abernathy B."/>
            <person name="Barry K."/>
            <person name="Blair M."/>
            <person name="Brick M.A."/>
            <person name="Chovatia M."/>
            <person name="Gepts P."/>
            <person name="Goodstein D.M."/>
            <person name="Gonzales M."/>
            <person name="Hellsten U."/>
            <person name="Hyten D.L."/>
            <person name="Jia G."/>
            <person name="Kelly J.D."/>
            <person name="Kudrna D."/>
            <person name="Lee R."/>
            <person name="Richard M.M."/>
            <person name="Miklas P.N."/>
            <person name="Osorno J.M."/>
            <person name="Rodrigues J."/>
            <person name="Thareau V."/>
            <person name="Urrea C.A."/>
            <person name="Wang M."/>
            <person name="Yu Y."/>
            <person name="Zhang M."/>
            <person name="Wing R.A."/>
            <person name="Cregan P.B."/>
            <person name="Rokhsar D.S."/>
            <person name="Jackson S.A."/>
        </authorList>
    </citation>
    <scope>NUCLEOTIDE SEQUENCE [LARGE SCALE GENOMIC DNA]</scope>
    <source>
        <strain>cv. G19833</strain>
    </source>
</reference>
<reference key="4">
    <citation type="journal article" date="2015" name="Plant J.">
        <title>Leghemoglobin is nitrated in functional legume nodules in a tyrosine residue within the heme cavity by a nitrite/peroxide-dependent mechanism.</title>
        <authorList>
            <person name="Sainz M."/>
            <person name="Calvo-Begueria L."/>
            <person name="Perez-Rontome C."/>
            <person name="Wienkoop S."/>
            <person name="Abian J."/>
            <person name="Staudinger C."/>
            <person name="Bartesaghi S."/>
            <person name="Radi R."/>
            <person name="Becana M."/>
        </authorList>
    </citation>
    <scope>NITRATION AT TYR-26; TYR-31 AND TYR-134</scope>
</reference>
<gene>
    <name evidence="8" type="primary">LBA</name>
    <name evidence="11" type="ORF">PHAVU_007G141900g</name>
    <name evidence="12" type="ORF">PHAVU_007G142500g</name>
    <name evidence="13" type="ORF">PHAVU_007G142600g</name>
</gene>
<keyword id="KW-0963">Cytoplasm</keyword>
<keyword id="KW-0903">Direct protein sequencing</keyword>
<keyword id="KW-0349">Heme</keyword>
<keyword id="KW-0408">Iron</keyword>
<keyword id="KW-0479">Metal-binding</keyword>
<keyword id="KW-0944">Nitration</keyword>
<keyword id="KW-0535">Nitrogen fixation</keyword>
<keyword id="KW-0536">Nodulation</keyword>
<keyword id="KW-0539">Nucleus</keyword>
<keyword id="KW-0561">Oxygen transport</keyword>
<keyword id="KW-0597">Phosphoprotein</keyword>
<keyword id="KW-1185">Reference proteome</keyword>
<keyword id="KW-0813">Transport</keyword>
<feature type="initiator methionine" description="Removed" evidence="7">
    <location>
        <position position="1"/>
    </location>
</feature>
<feature type="chain" id="PRO_0000192997" description="Leghemoglobin alpha">
    <location>
        <begin position="2"/>
        <end position="146"/>
    </location>
</feature>
<feature type="domain" description="Globin" evidence="5">
    <location>
        <begin position="3"/>
        <end position="146"/>
    </location>
</feature>
<feature type="binding site" evidence="2">
    <location>
        <position position="46"/>
    </location>
    <ligand>
        <name>heme b</name>
        <dbReference type="ChEBI" id="CHEBI:60344"/>
    </ligand>
</feature>
<feature type="binding site" evidence="2">
    <location>
        <position position="62"/>
    </location>
    <ligand>
        <name>O2</name>
        <dbReference type="ChEBI" id="CHEBI:15379"/>
    </ligand>
</feature>
<feature type="binding site" description="proximal binding residue" evidence="5">
    <location>
        <position position="93"/>
    </location>
    <ligand>
        <name>heme b</name>
        <dbReference type="ChEBI" id="CHEBI:60344"/>
    </ligand>
    <ligandPart>
        <name>Fe</name>
        <dbReference type="ChEBI" id="CHEBI:18248"/>
    </ligandPart>
</feature>
<feature type="binding site" evidence="2">
    <location>
        <position position="96"/>
    </location>
    <ligand>
        <name>heme b</name>
        <dbReference type="ChEBI" id="CHEBI:60344"/>
    </ligand>
</feature>
<feature type="modified residue" description="Nitrated tyrosine" evidence="6">
    <location>
        <position position="26"/>
    </location>
</feature>
<feature type="modified residue" description="Nitrated tyrosine" evidence="6">
    <location>
        <position position="31"/>
    </location>
</feature>
<feature type="modified residue" description="Phosphoserine" evidence="3">
    <location>
        <position position="46"/>
    </location>
</feature>
<feature type="modified residue" description="Nitrated tyrosine" evidence="6">
    <location>
        <position position="134"/>
    </location>
</feature>
<feature type="sequence conflict" description="In Ref. 1; AA sequence." evidence="10" ref="1">
    <original>NDS</original>
    <variation>SND</variation>
    <location>
        <begin position="99"/>
        <end position="101"/>
    </location>
</feature>
<feature type="sequence conflict" description="In Ref. 1; AA sequence." evidence="10" ref="1">
    <original>E</original>
    <variation>Q</variation>
    <location>
        <position position="116"/>
    </location>
</feature>
<feature type="sequence conflict" description="In Ref. 1; AA sequence." evidence="10" ref="1">
    <original>E</original>
    <variation>Q</variation>
    <location>
        <position position="125"/>
    </location>
</feature>
<organism>
    <name type="scientific">Phaseolus vulgaris</name>
    <name type="common">Kidney bean</name>
    <name type="synonym">French bean</name>
    <dbReference type="NCBI Taxonomy" id="3885"/>
    <lineage>
        <taxon>Eukaryota</taxon>
        <taxon>Viridiplantae</taxon>
        <taxon>Streptophyta</taxon>
        <taxon>Embryophyta</taxon>
        <taxon>Tracheophyta</taxon>
        <taxon>Spermatophyta</taxon>
        <taxon>Magnoliopsida</taxon>
        <taxon>eudicotyledons</taxon>
        <taxon>Gunneridae</taxon>
        <taxon>Pentapetalae</taxon>
        <taxon>rosids</taxon>
        <taxon>fabids</taxon>
        <taxon>Fabales</taxon>
        <taxon>Fabaceae</taxon>
        <taxon>Papilionoideae</taxon>
        <taxon>50 kb inversion clade</taxon>
        <taxon>NPAAA clade</taxon>
        <taxon>indigoferoid/millettioid clade</taxon>
        <taxon>Phaseoleae</taxon>
        <taxon>Phaseolus</taxon>
    </lineage>
</organism>
<sequence>MGAFTEKQEALVNSSWEAFKGNIPQYSVVFYTSILEKAPAAKNLFSFLANGVDPTNPKLTAHAESLFGLVRDSAAQLRANGAVVADAALGSIHSQKGVNDSQFLVVKEALLKTLKEAVGDKWTDELSTALELAYDELAAAIKKAYA</sequence>
<comment type="function">
    <text evidence="1 4">Leghemoglobin that reversibly binds oxygen O(2) through a pentacoordinated heme iron (By similarity). In root nodules, facilitates the diffusion of oxygen to the bacteroids while preventing the bacterial nitrogenase from being inactivated by buffering dioxygen, nitric oxide and carbon monoxide, and promoting the formation of reactive oxygen species (ROS, e.g. H(2)O(2)) (By similarity). This role is essential for symbiotic nitrogen fixation (SNF) (By similarity).</text>
</comment>
<comment type="subunit">
    <text evidence="2">Monomer.</text>
</comment>
<comment type="subcellular location">
    <subcellularLocation>
        <location evidence="2">Cytoplasm</location>
        <location evidence="2">Cytosol</location>
    </subcellularLocation>
    <subcellularLocation>
        <location evidence="2">Nucleus</location>
    </subcellularLocation>
</comment>
<comment type="tissue specificity">
    <text evidence="7">Root nodules.</text>
</comment>
<comment type="PTM">
    <text evidence="6">Nitrated mainly at Tyr-31 and, to a lower extent, at Tyr-26 and Tyr-134, in effective nodules and particularly in hypoxic conditions; this mechanism may play a protective role in the symbiosis by buffering toxic peroxynitrite NO(2)(-) (PubMed:25603991). Nitration level decrease during nodule senescence (PubMed:25603991).</text>
</comment>
<comment type="PTM">
    <text evidence="3">Phosphorylation at Ser-46 disrupts the molecular environment of its porphyrin ring oxygen binding pocket, thus leading to a reduced oxygen consumption and to the delivery of oxygen O(2) to symbiosomes.</text>
</comment>
<comment type="similarity">
    <text evidence="10">Belongs to the plant globin family.</text>
</comment>